<comment type="function">
    <text evidence="1">Catalyzes the pyruvoyl-dependent decarboxylation of aspartate to produce beta-alanine.</text>
</comment>
<comment type="catalytic activity">
    <reaction evidence="1">
        <text>L-aspartate + H(+) = beta-alanine + CO2</text>
        <dbReference type="Rhea" id="RHEA:19497"/>
        <dbReference type="ChEBI" id="CHEBI:15378"/>
        <dbReference type="ChEBI" id="CHEBI:16526"/>
        <dbReference type="ChEBI" id="CHEBI:29991"/>
        <dbReference type="ChEBI" id="CHEBI:57966"/>
        <dbReference type="EC" id="4.1.1.11"/>
    </reaction>
</comment>
<comment type="cofactor">
    <cofactor evidence="1">
        <name>pyruvate</name>
        <dbReference type="ChEBI" id="CHEBI:15361"/>
    </cofactor>
    <text evidence="1">Binds 1 pyruvoyl group covalently per subunit.</text>
</comment>
<comment type="pathway">
    <text evidence="1">Cofactor biosynthesis; (R)-pantothenate biosynthesis; beta-alanine from L-aspartate: step 1/1.</text>
</comment>
<comment type="subunit">
    <text evidence="1">Heterooctamer of four alpha and four beta subunits.</text>
</comment>
<comment type="subcellular location">
    <subcellularLocation>
        <location evidence="1">Cytoplasm</location>
    </subcellularLocation>
</comment>
<comment type="PTM">
    <text evidence="1">Is synthesized initially as an inactive proenzyme, which is activated by self-cleavage at a specific serine bond to produce a beta-subunit with a hydroxyl group at its C-terminus and an alpha-subunit with a pyruvoyl group at its N-terminus.</text>
</comment>
<comment type="similarity">
    <text evidence="1">Belongs to the PanD family.</text>
</comment>
<proteinExistence type="inferred from homology"/>
<dbReference type="EC" id="4.1.1.11" evidence="1"/>
<dbReference type="EMBL" id="AJ252206">
    <property type="protein sequence ID" value="CAD22577.1"/>
    <property type="molecule type" value="Genomic_DNA"/>
</dbReference>
<dbReference type="EMBL" id="BA000019">
    <property type="protein sequence ID" value="BAB75268.1"/>
    <property type="molecule type" value="Genomic_DNA"/>
</dbReference>
<dbReference type="PIR" id="AB2252">
    <property type="entry name" value="AB2252"/>
</dbReference>
<dbReference type="RefSeq" id="WP_010997719.1">
    <property type="nucleotide sequence ID" value="NZ_RSCN01000034.1"/>
</dbReference>
<dbReference type="SMR" id="Q8YR79"/>
<dbReference type="STRING" id="103690.gene:10495610"/>
<dbReference type="GeneID" id="58726340"/>
<dbReference type="KEGG" id="ana:all3569"/>
<dbReference type="eggNOG" id="COG0853">
    <property type="taxonomic scope" value="Bacteria"/>
</dbReference>
<dbReference type="OrthoDB" id="9803983at2"/>
<dbReference type="UniPathway" id="UPA00028">
    <property type="reaction ID" value="UER00002"/>
</dbReference>
<dbReference type="Proteomes" id="UP000002483">
    <property type="component" value="Chromosome"/>
</dbReference>
<dbReference type="GO" id="GO:0005829">
    <property type="term" value="C:cytosol"/>
    <property type="evidence" value="ECO:0007669"/>
    <property type="project" value="TreeGrafter"/>
</dbReference>
<dbReference type="GO" id="GO:0004068">
    <property type="term" value="F:aspartate 1-decarboxylase activity"/>
    <property type="evidence" value="ECO:0007669"/>
    <property type="project" value="UniProtKB-UniRule"/>
</dbReference>
<dbReference type="GO" id="GO:0006523">
    <property type="term" value="P:alanine biosynthetic process"/>
    <property type="evidence" value="ECO:0007669"/>
    <property type="project" value="InterPro"/>
</dbReference>
<dbReference type="GO" id="GO:0015940">
    <property type="term" value="P:pantothenate biosynthetic process"/>
    <property type="evidence" value="ECO:0007669"/>
    <property type="project" value="UniProtKB-UniRule"/>
</dbReference>
<dbReference type="CDD" id="cd06919">
    <property type="entry name" value="Asp_decarbox"/>
    <property type="match status" value="1"/>
</dbReference>
<dbReference type="Gene3D" id="2.40.40.20">
    <property type="match status" value="1"/>
</dbReference>
<dbReference type="HAMAP" id="MF_00446">
    <property type="entry name" value="PanD"/>
    <property type="match status" value="1"/>
</dbReference>
<dbReference type="InterPro" id="IPR009010">
    <property type="entry name" value="Asp_de-COase-like_dom_sf"/>
</dbReference>
<dbReference type="InterPro" id="IPR003190">
    <property type="entry name" value="Asp_decarbox"/>
</dbReference>
<dbReference type="NCBIfam" id="TIGR00223">
    <property type="entry name" value="panD"/>
    <property type="match status" value="1"/>
</dbReference>
<dbReference type="PANTHER" id="PTHR21012">
    <property type="entry name" value="ASPARTATE 1-DECARBOXYLASE"/>
    <property type="match status" value="1"/>
</dbReference>
<dbReference type="PANTHER" id="PTHR21012:SF0">
    <property type="entry name" value="ASPARTATE 1-DECARBOXYLASE"/>
    <property type="match status" value="1"/>
</dbReference>
<dbReference type="Pfam" id="PF02261">
    <property type="entry name" value="Asp_decarbox"/>
    <property type="match status" value="1"/>
</dbReference>
<dbReference type="PIRSF" id="PIRSF006246">
    <property type="entry name" value="Asp_decarbox"/>
    <property type="match status" value="1"/>
</dbReference>
<dbReference type="SUPFAM" id="SSF50692">
    <property type="entry name" value="ADC-like"/>
    <property type="match status" value="1"/>
</dbReference>
<feature type="chain" id="PRO_0000023013" description="Aspartate 1-decarboxylase beta chain" evidence="1">
    <location>
        <begin position="1"/>
        <end position="24"/>
    </location>
</feature>
<feature type="chain" id="PRO_0000023014" description="Aspartate 1-decarboxylase alpha chain" evidence="1">
    <location>
        <begin position="25"/>
        <end position="127"/>
    </location>
</feature>
<feature type="active site" description="Schiff-base intermediate with substrate; via pyruvic acid" evidence="1">
    <location>
        <position position="25"/>
    </location>
</feature>
<feature type="active site" description="Proton donor" evidence="1">
    <location>
        <position position="58"/>
    </location>
</feature>
<feature type="binding site" evidence="1">
    <location>
        <position position="57"/>
    </location>
    <ligand>
        <name>substrate</name>
    </ligand>
</feature>
<feature type="binding site" evidence="1">
    <location>
        <begin position="73"/>
        <end position="75"/>
    </location>
    <ligand>
        <name>substrate</name>
    </ligand>
</feature>
<feature type="modified residue" description="Pyruvic acid (Ser)" evidence="1">
    <location>
        <position position="25"/>
    </location>
</feature>
<reference key="1">
    <citation type="submission" date="2000-03" db="EMBL/GenBank/DDBJ databases">
        <title>Soluble inorganic pyrophosphatases from photosynthetic prokaryotes: protein characterization and cloning of ppa genes.</title>
        <authorList>
            <person name="Gomez R."/>
            <person name="Loeffelhardt W."/>
            <person name="Losada M."/>
            <person name="Serrano A."/>
        </authorList>
    </citation>
    <scope>NUCLEOTIDE SEQUENCE [GENOMIC DNA]</scope>
</reference>
<reference key="2">
    <citation type="journal article" date="2001" name="DNA Res.">
        <title>Complete genomic sequence of the filamentous nitrogen-fixing cyanobacterium Anabaena sp. strain PCC 7120.</title>
        <authorList>
            <person name="Kaneko T."/>
            <person name="Nakamura Y."/>
            <person name="Wolk C.P."/>
            <person name="Kuritz T."/>
            <person name="Sasamoto S."/>
            <person name="Watanabe A."/>
            <person name="Iriguchi M."/>
            <person name="Ishikawa A."/>
            <person name="Kawashima K."/>
            <person name="Kimura T."/>
            <person name="Kishida Y."/>
            <person name="Kohara M."/>
            <person name="Matsumoto M."/>
            <person name="Matsuno A."/>
            <person name="Muraki A."/>
            <person name="Nakazaki N."/>
            <person name="Shimpo S."/>
            <person name="Sugimoto M."/>
            <person name="Takazawa M."/>
            <person name="Yamada M."/>
            <person name="Yasuda M."/>
            <person name="Tabata S."/>
        </authorList>
    </citation>
    <scope>NUCLEOTIDE SEQUENCE [LARGE SCALE GENOMIC DNA]</scope>
    <source>
        <strain>PCC 7120 / SAG 25.82 / UTEX 2576</strain>
    </source>
</reference>
<accession>Q8YR79</accession>
<organism>
    <name type="scientific">Nostoc sp. (strain PCC 7120 / SAG 25.82 / UTEX 2576)</name>
    <dbReference type="NCBI Taxonomy" id="103690"/>
    <lineage>
        <taxon>Bacteria</taxon>
        <taxon>Bacillati</taxon>
        <taxon>Cyanobacteriota</taxon>
        <taxon>Cyanophyceae</taxon>
        <taxon>Nostocales</taxon>
        <taxon>Nostocaceae</taxon>
        <taxon>Nostoc</taxon>
    </lineage>
</organism>
<protein>
    <recommendedName>
        <fullName evidence="1">Aspartate 1-decarboxylase</fullName>
        <ecNumber evidence="1">4.1.1.11</ecNumber>
    </recommendedName>
    <alternativeName>
        <fullName evidence="1">Aspartate alpha-decarboxylase</fullName>
    </alternativeName>
    <component>
        <recommendedName>
            <fullName evidence="1">Aspartate 1-decarboxylase beta chain</fullName>
        </recommendedName>
    </component>
    <component>
        <recommendedName>
            <fullName evidence="1">Aspartate 1-decarboxylase alpha chain</fullName>
        </recommendedName>
    </component>
</protein>
<keyword id="KW-0068">Autocatalytic cleavage</keyword>
<keyword id="KW-0963">Cytoplasm</keyword>
<keyword id="KW-0210">Decarboxylase</keyword>
<keyword id="KW-0456">Lyase</keyword>
<keyword id="KW-0566">Pantothenate biosynthesis</keyword>
<keyword id="KW-0670">Pyruvate</keyword>
<keyword id="KW-1185">Reference proteome</keyword>
<keyword id="KW-0704">Schiff base</keyword>
<keyword id="KW-0865">Zymogen</keyword>
<name>PAND_NOSS1</name>
<evidence type="ECO:0000255" key="1">
    <source>
        <dbReference type="HAMAP-Rule" id="MF_00446"/>
    </source>
</evidence>
<sequence>MQRTLLLAKIHNCTLTGANINYVGSISIDQILLDKSGILPYEQVQVVNNANGQRFITYAIPAPAHSGIIELNGAAARLGIIGDRVIIMTYGQFTSEELKSYTPTVVIVDEKNRPLEVRRYDDLLSQV</sequence>
<gene>
    <name evidence="1" type="primary">panD</name>
    <name type="ordered locus">all3569</name>
</gene>